<reference key="1">
    <citation type="journal article" date="2008" name="Genome Res.">
        <title>Genome sequence of the beta-rhizobium Cupriavidus taiwanensis and comparative genomics of rhizobia.</title>
        <authorList>
            <person name="Amadou C."/>
            <person name="Pascal G."/>
            <person name="Mangenot S."/>
            <person name="Glew M."/>
            <person name="Bontemps C."/>
            <person name="Capela D."/>
            <person name="Carrere S."/>
            <person name="Cruveiller S."/>
            <person name="Dossat C."/>
            <person name="Lajus A."/>
            <person name="Marchetti M."/>
            <person name="Poinsot V."/>
            <person name="Rouy Z."/>
            <person name="Servin B."/>
            <person name="Saad M."/>
            <person name="Schenowitz C."/>
            <person name="Barbe V."/>
            <person name="Batut J."/>
            <person name="Medigue C."/>
            <person name="Masson-Boivin C."/>
        </authorList>
    </citation>
    <scope>NUCLEOTIDE SEQUENCE [LARGE SCALE GENOMIC DNA]</scope>
    <source>
        <strain>DSM 17343 / BCRC 17206 / CCUG 44338 / CIP 107171 / LMG 19424 / R1</strain>
    </source>
</reference>
<evidence type="ECO:0000255" key="1">
    <source>
        <dbReference type="HAMAP-Rule" id="MF_01080"/>
    </source>
</evidence>
<keyword id="KW-0413">Isomerase</keyword>
<keyword id="KW-0819">tRNA processing</keyword>
<proteinExistence type="inferred from homology"/>
<gene>
    <name evidence="1" type="primary">truB</name>
    <name type="ordered locus">RALTA_A1848</name>
</gene>
<name>TRUB_CUPTR</name>
<dbReference type="EC" id="5.4.99.25" evidence="1"/>
<dbReference type="EMBL" id="CU633749">
    <property type="protein sequence ID" value="CAQ69789.1"/>
    <property type="molecule type" value="Genomic_DNA"/>
</dbReference>
<dbReference type="RefSeq" id="WP_012353106.1">
    <property type="nucleotide sequence ID" value="NC_010528.1"/>
</dbReference>
<dbReference type="SMR" id="B3R1E2"/>
<dbReference type="GeneID" id="29761201"/>
<dbReference type="KEGG" id="cti:RALTA_A1848"/>
<dbReference type="eggNOG" id="COG0130">
    <property type="taxonomic scope" value="Bacteria"/>
</dbReference>
<dbReference type="HOGENOM" id="CLU_032087_0_3_4"/>
<dbReference type="BioCyc" id="CTAI977880:RALTA_RS08905-MONOMER"/>
<dbReference type="Proteomes" id="UP000001692">
    <property type="component" value="Chromosome 1"/>
</dbReference>
<dbReference type="GO" id="GO:0003723">
    <property type="term" value="F:RNA binding"/>
    <property type="evidence" value="ECO:0007669"/>
    <property type="project" value="InterPro"/>
</dbReference>
<dbReference type="GO" id="GO:0160148">
    <property type="term" value="F:tRNA pseudouridine(55) synthase activity"/>
    <property type="evidence" value="ECO:0007669"/>
    <property type="project" value="UniProtKB-EC"/>
</dbReference>
<dbReference type="GO" id="GO:1990481">
    <property type="term" value="P:mRNA pseudouridine synthesis"/>
    <property type="evidence" value="ECO:0007669"/>
    <property type="project" value="TreeGrafter"/>
</dbReference>
<dbReference type="GO" id="GO:0031119">
    <property type="term" value="P:tRNA pseudouridine synthesis"/>
    <property type="evidence" value="ECO:0007669"/>
    <property type="project" value="UniProtKB-UniRule"/>
</dbReference>
<dbReference type="CDD" id="cd02573">
    <property type="entry name" value="PseudoU_synth_EcTruB"/>
    <property type="match status" value="1"/>
</dbReference>
<dbReference type="CDD" id="cd21152">
    <property type="entry name" value="PUA_TruB_bacterial"/>
    <property type="match status" value="1"/>
</dbReference>
<dbReference type="FunFam" id="3.30.2350.10:FF:000011">
    <property type="entry name" value="tRNA pseudouridine synthase B"/>
    <property type="match status" value="1"/>
</dbReference>
<dbReference type="Gene3D" id="3.30.2350.10">
    <property type="entry name" value="Pseudouridine synthase"/>
    <property type="match status" value="1"/>
</dbReference>
<dbReference type="Gene3D" id="2.30.130.10">
    <property type="entry name" value="PUA domain"/>
    <property type="match status" value="1"/>
</dbReference>
<dbReference type="HAMAP" id="MF_01080">
    <property type="entry name" value="TruB_bact"/>
    <property type="match status" value="1"/>
</dbReference>
<dbReference type="InterPro" id="IPR020103">
    <property type="entry name" value="PsdUridine_synth_cat_dom_sf"/>
</dbReference>
<dbReference type="InterPro" id="IPR002501">
    <property type="entry name" value="PsdUridine_synth_N"/>
</dbReference>
<dbReference type="InterPro" id="IPR015947">
    <property type="entry name" value="PUA-like_sf"/>
</dbReference>
<dbReference type="InterPro" id="IPR036974">
    <property type="entry name" value="PUA_sf"/>
</dbReference>
<dbReference type="InterPro" id="IPR014780">
    <property type="entry name" value="tRNA_psdUridine_synth_TruB"/>
</dbReference>
<dbReference type="InterPro" id="IPR015240">
    <property type="entry name" value="tRNA_sdUridine_synth_fam1_C"/>
</dbReference>
<dbReference type="InterPro" id="IPR032819">
    <property type="entry name" value="TruB_C"/>
</dbReference>
<dbReference type="NCBIfam" id="TIGR00431">
    <property type="entry name" value="TruB"/>
    <property type="match status" value="1"/>
</dbReference>
<dbReference type="PANTHER" id="PTHR13767:SF2">
    <property type="entry name" value="PSEUDOURIDYLATE SYNTHASE TRUB1"/>
    <property type="match status" value="1"/>
</dbReference>
<dbReference type="PANTHER" id="PTHR13767">
    <property type="entry name" value="TRNA-PSEUDOURIDINE SYNTHASE"/>
    <property type="match status" value="1"/>
</dbReference>
<dbReference type="Pfam" id="PF09157">
    <property type="entry name" value="TruB-C_2"/>
    <property type="match status" value="1"/>
</dbReference>
<dbReference type="Pfam" id="PF16198">
    <property type="entry name" value="TruB_C_2"/>
    <property type="match status" value="1"/>
</dbReference>
<dbReference type="Pfam" id="PF01509">
    <property type="entry name" value="TruB_N"/>
    <property type="match status" value="1"/>
</dbReference>
<dbReference type="SUPFAM" id="SSF55120">
    <property type="entry name" value="Pseudouridine synthase"/>
    <property type="match status" value="1"/>
</dbReference>
<dbReference type="SUPFAM" id="SSF88697">
    <property type="entry name" value="PUA domain-like"/>
    <property type="match status" value="1"/>
</dbReference>
<accession>B3R1E2</accession>
<organism>
    <name type="scientific">Cupriavidus taiwanensis (strain DSM 17343 / BCRC 17206 / CCUG 44338 / CIP 107171 / LMG 19424 / R1)</name>
    <name type="common">Ralstonia taiwanensis (strain LMG 19424)</name>
    <dbReference type="NCBI Taxonomy" id="977880"/>
    <lineage>
        <taxon>Bacteria</taxon>
        <taxon>Pseudomonadati</taxon>
        <taxon>Pseudomonadota</taxon>
        <taxon>Betaproteobacteria</taxon>
        <taxon>Burkholderiales</taxon>
        <taxon>Burkholderiaceae</taxon>
        <taxon>Cupriavidus</taxon>
    </lineage>
</organism>
<sequence>MTDSNANRPPRLPRREVHGVLLLDKPLGLSSNDALVRAKRLLRAAKAGHTGTLDPLATGLLPLCFGEATKFSQDLLEADKTYDAEVRLGARSSTGDAEGELLDVRAVTCDRAAVEQALEGFIGEIEQVPPMHSALKKDGRPLYEYARAGQTVERAARRVTIRSIALLECALPGAPSFTMRVTCSKGTYIRTLAEDIGEALGCGAHLTGLRRIAVGDLTLDGAVTLAQIEAQDDAQRPAMLAPVDALLQKCVPVQLDAAAAGRFLQGQRIAQRDLPVGTALAENSLARVYAGEPSRLLGVARMREGALRPERLVKL</sequence>
<feature type="chain" id="PRO_1000136813" description="tRNA pseudouridine synthase B">
    <location>
        <begin position="1"/>
        <end position="315"/>
    </location>
</feature>
<feature type="active site" description="Nucleophile" evidence="1">
    <location>
        <position position="54"/>
    </location>
</feature>
<protein>
    <recommendedName>
        <fullName evidence="1">tRNA pseudouridine synthase B</fullName>
        <ecNumber evidence="1">5.4.99.25</ecNumber>
    </recommendedName>
    <alternativeName>
        <fullName evidence="1">tRNA pseudouridine(55) synthase</fullName>
        <shortName evidence="1">Psi55 synthase</shortName>
    </alternativeName>
    <alternativeName>
        <fullName evidence="1">tRNA pseudouridylate synthase</fullName>
    </alternativeName>
    <alternativeName>
        <fullName evidence="1">tRNA-uridine isomerase</fullName>
    </alternativeName>
</protein>
<comment type="function">
    <text evidence="1">Responsible for synthesis of pseudouridine from uracil-55 in the psi GC loop of transfer RNAs.</text>
</comment>
<comment type="catalytic activity">
    <reaction evidence="1">
        <text>uridine(55) in tRNA = pseudouridine(55) in tRNA</text>
        <dbReference type="Rhea" id="RHEA:42532"/>
        <dbReference type="Rhea" id="RHEA-COMP:10101"/>
        <dbReference type="Rhea" id="RHEA-COMP:10102"/>
        <dbReference type="ChEBI" id="CHEBI:65314"/>
        <dbReference type="ChEBI" id="CHEBI:65315"/>
        <dbReference type="EC" id="5.4.99.25"/>
    </reaction>
</comment>
<comment type="similarity">
    <text evidence="1">Belongs to the pseudouridine synthase TruB family. Type 1 subfamily.</text>
</comment>